<keyword id="KW-0150">Chloroplast</keyword>
<keyword id="KW-0249">Electron transport</keyword>
<keyword id="KW-0472">Membrane</keyword>
<keyword id="KW-0602">Photosynthesis</keyword>
<keyword id="KW-0934">Plastid</keyword>
<keyword id="KW-0793">Thylakoid</keyword>
<keyword id="KW-0812">Transmembrane</keyword>
<keyword id="KW-1133">Transmembrane helix</keyword>
<keyword id="KW-0813">Transport</keyword>
<dbReference type="EMBL" id="AP006714">
    <property type="protein sequence ID" value="BAD27323.1"/>
    <property type="molecule type" value="Genomic_DNA"/>
</dbReference>
<dbReference type="SMR" id="Q6ENT3"/>
<dbReference type="GO" id="GO:0009535">
    <property type="term" value="C:chloroplast thylakoid membrane"/>
    <property type="evidence" value="ECO:0007669"/>
    <property type="project" value="UniProtKB-SubCell"/>
</dbReference>
<dbReference type="GO" id="GO:0045158">
    <property type="term" value="F:electron transporter, transferring electrons within cytochrome b6/f complex of photosystem II activity"/>
    <property type="evidence" value="ECO:0007669"/>
    <property type="project" value="UniProtKB-UniRule"/>
</dbReference>
<dbReference type="GO" id="GO:0045156">
    <property type="term" value="F:electron transporter, transferring electrons within the cyclic electron transport pathway of photosynthesis activity"/>
    <property type="evidence" value="ECO:0007669"/>
    <property type="project" value="InterPro"/>
</dbReference>
<dbReference type="GO" id="GO:0016491">
    <property type="term" value="F:oxidoreductase activity"/>
    <property type="evidence" value="ECO:0007669"/>
    <property type="project" value="InterPro"/>
</dbReference>
<dbReference type="GO" id="GO:0009767">
    <property type="term" value="P:photosynthetic electron transport chain"/>
    <property type="evidence" value="ECO:0007669"/>
    <property type="project" value="InterPro"/>
</dbReference>
<dbReference type="CDD" id="cd00290">
    <property type="entry name" value="cytochrome_b_C"/>
    <property type="match status" value="1"/>
</dbReference>
<dbReference type="FunFam" id="1.10.287.980:FF:000001">
    <property type="entry name" value="Cytochrome b6-f complex subunit 4"/>
    <property type="match status" value="1"/>
</dbReference>
<dbReference type="FunFam" id="1.20.5.510:FF:000002">
    <property type="entry name" value="Cytochrome b6-f complex subunit 4"/>
    <property type="match status" value="1"/>
</dbReference>
<dbReference type="Gene3D" id="1.10.287.980">
    <property type="entry name" value="plastocyanin oxidoreductase"/>
    <property type="match status" value="1"/>
</dbReference>
<dbReference type="Gene3D" id="1.20.5.510">
    <property type="entry name" value="Single helix bin"/>
    <property type="match status" value="1"/>
</dbReference>
<dbReference type="HAMAP" id="MF_01344">
    <property type="entry name" value="Cytb6_f_subIV"/>
    <property type="match status" value="1"/>
</dbReference>
<dbReference type="InterPro" id="IPR005798">
    <property type="entry name" value="Cyt_b/b6_C"/>
</dbReference>
<dbReference type="InterPro" id="IPR036150">
    <property type="entry name" value="Cyt_b/b6_C_sf"/>
</dbReference>
<dbReference type="InterPro" id="IPR005870">
    <property type="entry name" value="Cyt_b6/f_cplx_suIV"/>
</dbReference>
<dbReference type="InterPro" id="IPR048260">
    <property type="entry name" value="Cytochrome_b_C_euk/bac"/>
</dbReference>
<dbReference type="NCBIfam" id="TIGR01156">
    <property type="entry name" value="cytb6_f_IV"/>
    <property type="match status" value="1"/>
</dbReference>
<dbReference type="PANTHER" id="PTHR19271">
    <property type="entry name" value="CYTOCHROME B"/>
    <property type="match status" value="1"/>
</dbReference>
<dbReference type="PANTHER" id="PTHR19271:SF40">
    <property type="entry name" value="CYTOCHROME B"/>
    <property type="match status" value="1"/>
</dbReference>
<dbReference type="Pfam" id="PF00032">
    <property type="entry name" value="Cytochrom_B_C"/>
    <property type="match status" value="1"/>
</dbReference>
<dbReference type="PIRSF" id="PIRSF000033">
    <property type="entry name" value="B6f_17K"/>
    <property type="match status" value="1"/>
</dbReference>
<dbReference type="SUPFAM" id="SSF81648">
    <property type="entry name" value="a domain/subunit of cytochrome bc1 complex (Ubiquinol-cytochrome c reductase)"/>
    <property type="match status" value="1"/>
</dbReference>
<dbReference type="PROSITE" id="PS51003">
    <property type="entry name" value="CYTB_CTER"/>
    <property type="match status" value="1"/>
</dbReference>
<sequence>MGVTKKPDLNDPVLRAKLAKGMGHNYYGEPAWPNDLLYIFPVVILGTIACNVGLAVLEPSMIGEPADPFATPLEILPEWYFFPVFQILRTVPNKLLGVLLMVSVPTGLLTVPFLENVNKFQNPFRRPVATTVFLIGTAVALWLGIGATLPIDKSLTLGLF</sequence>
<protein>
    <recommendedName>
        <fullName evidence="2">Cytochrome b6-f complex subunit 4</fullName>
    </recommendedName>
    <alternativeName>
        <fullName evidence="2">17 kDa polypeptide</fullName>
    </alternativeName>
</protein>
<evidence type="ECO:0000250" key="1"/>
<evidence type="ECO:0000255" key="2">
    <source>
        <dbReference type="HAMAP-Rule" id="MF_01344"/>
    </source>
</evidence>
<gene>
    <name evidence="2" type="primary">petD</name>
</gene>
<reference key="1">
    <citation type="journal article" date="2004" name="DNA Res.">
        <title>Complete nucleotide sequence of the sugarcane (Saccharum officinarum) chloroplast genome: a comparative analysis of four monocot chloroplast genomes.</title>
        <authorList>
            <person name="Asano T."/>
            <person name="Tsudzuki T."/>
            <person name="Takahashi S."/>
            <person name="Shimada H."/>
            <person name="Kadowaki K."/>
        </authorList>
    </citation>
    <scope>NUCLEOTIDE SEQUENCE [LARGE SCALE GENOMIC DNA]</scope>
</reference>
<proteinExistence type="inferred from homology"/>
<feature type="chain" id="PRO_0000061888" description="Cytochrome b6-f complex subunit 4">
    <location>
        <begin position="1"/>
        <end position="160"/>
    </location>
</feature>
<feature type="transmembrane region" description="Helical" evidence="2">
    <location>
        <begin position="36"/>
        <end position="56"/>
    </location>
</feature>
<feature type="transmembrane region" description="Helical" evidence="2">
    <location>
        <begin position="95"/>
        <end position="115"/>
    </location>
</feature>
<feature type="transmembrane region" description="Helical" evidence="2">
    <location>
        <begin position="131"/>
        <end position="151"/>
    </location>
</feature>
<accession>Q6ENT3</accession>
<geneLocation type="chloroplast"/>
<organism>
    <name type="scientific">Saccharum officinarum</name>
    <name type="common">Sugarcane</name>
    <dbReference type="NCBI Taxonomy" id="4547"/>
    <lineage>
        <taxon>Eukaryota</taxon>
        <taxon>Viridiplantae</taxon>
        <taxon>Streptophyta</taxon>
        <taxon>Embryophyta</taxon>
        <taxon>Tracheophyta</taxon>
        <taxon>Spermatophyta</taxon>
        <taxon>Magnoliopsida</taxon>
        <taxon>Liliopsida</taxon>
        <taxon>Poales</taxon>
        <taxon>Poaceae</taxon>
        <taxon>PACMAD clade</taxon>
        <taxon>Panicoideae</taxon>
        <taxon>Andropogonodae</taxon>
        <taxon>Andropogoneae</taxon>
        <taxon>Saccharinae</taxon>
        <taxon>Saccharum</taxon>
        <taxon>Saccharum officinarum species complex</taxon>
    </lineage>
</organism>
<comment type="function">
    <text evidence="2">Component of the cytochrome b6-f complex, which mediates electron transfer between photosystem II (PSII) and photosystem I (PSI), cyclic electron flow around PSI, and state transitions.</text>
</comment>
<comment type="subunit">
    <text evidence="1">The 4 large subunits of the cytochrome b6-f complex are cytochrome b6, subunit IV (17 kDa polypeptide, petD), cytochrome f and the Rieske protein, while the 4 small subunits are petG, petL, petM and petN. The complex functions as a dimer (By similarity).</text>
</comment>
<comment type="subcellular location">
    <subcellularLocation>
        <location evidence="2">Plastid</location>
        <location evidence="2">Chloroplast thylakoid membrane</location>
        <topology evidence="2">Multi-pass membrane protein</topology>
    </subcellularLocation>
</comment>
<comment type="similarity">
    <text evidence="2">Belongs to the cytochrome b family. PetD subfamily.</text>
</comment>
<name>PETD_SACOF</name>